<dbReference type="EMBL" id="CP000308">
    <property type="protein sequence ID" value="ABG12585.1"/>
    <property type="molecule type" value="Genomic_DNA"/>
</dbReference>
<dbReference type="RefSeq" id="WP_002208766.1">
    <property type="nucleotide sequence ID" value="NZ_CP009906.1"/>
</dbReference>
<dbReference type="SMR" id="Q1CAD7"/>
<dbReference type="KEGG" id="ypa:YPA_0617"/>
<dbReference type="Proteomes" id="UP000001971">
    <property type="component" value="Chromosome"/>
</dbReference>
<dbReference type="GO" id="GO:0005886">
    <property type="term" value="C:plasma membrane"/>
    <property type="evidence" value="ECO:0007669"/>
    <property type="project" value="UniProtKB-SubCell"/>
</dbReference>
<dbReference type="GO" id="GO:0008324">
    <property type="term" value="F:monoatomic cation transmembrane transporter activity"/>
    <property type="evidence" value="ECO:0007669"/>
    <property type="project" value="InterPro"/>
</dbReference>
<dbReference type="GO" id="GO:0006813">
    <property type="term" value="P:potassium ion transport"/>
    <property type="evidence" value="ECO:0007669"/>
    <property type="project" value="InterPro"/>
</dbReference>
<dbReference type="FunFam" id="3.30.70.1450:FF:000003">
    <property type="entry name" value="Putative transport protein YbjL"/>
    <property type="match status" value="1"/>
</dbReference>
<dbReference type="Gene3D" id="3.30.70.1450">
    <property type="entry name" value="Regulator of K+ conductance, C-terminal domain"/>
    <property type="match status" value="2"/>
</dbReference>
<dbReference type="HAMAP" id="MF_01015">
    <property type="entry name" value="YbjL"/>
    <property type="match status" value="1"/>
</dbReference>
<dbReference type="InterPro" id="IPR050144">
    <property type="entry name" value="AAE_transporter"/>
</dbReference>
<dbReference type="InterPro" id="IPR006037">
    <property type="entry name" value="RCK_C"/>
</dbReference>
<dbReference type="InterPro" id="IPR036721">
    <property type="entry name" value="RCK_C_sf"/>
</dbReference>
<dbReference type="InterPro" id="IPR023017">
    <property type="entry name" value="Transp_YbjL_put"/>
</dbReference>
<dbReference type="InterPro" id="IPR006512">
    <property type="entry name" value="YidE_YbjL"/>
</dbReference>
<dbReference type="NCBIfam" id="NF003440">
    <property type="entry name" value="PRK04972.1"/>
    <property type="match status" value="1"/>
</dbReference>
<dbReference type="NCBIfam" id="TIGR01625">
    <property type="entry name" value="YidE_YbjL_dupl"/>
    <property type="match status" value="2"/>
</dbReference>
<dbReference type="PANTHER" id="PTHR30445">
    <property type="entry name" value="K(+)_H(+) ANTIPORTER SUBUNIT KHTT"/>
    <property type="match status" value="1"/>
</dbReference>
<dbReference type="PANTHER" id="PTHR30445:SF10">
    <property type="entry name" value="TRANSPORT PROTEIN YBJL-RELATED"/>
    <property type="match status" value="1"/>
</dbReference>
<dbReference type="Pfam" id="PF06826">
    <property type="entry name" value="Asp-Al_Ex"/>
    <property type="match status" value="2"/>
</dbReference>
<dbReference type="Pfam" id="PF02080">
    <property type="entry name" value="TrkA_C"/>
    <property type="match status" value="2"/>
</dbReference>
<dbReference type="SUPFAM" id="SSF116726">
    <property type="entry name" value="TrkA C-terminal domain-like"/>
    <property type="match status" value="2"/>
</dbReference>
<dbReference type="PROSITE" id="PS51202">
    <property type="entry name" value="RCK_C"/>
    <property type="match status" value="2"/>
</dbReference>
<comment type="subcellular location">
    <subcellularLocation>
        <location evidence="1">Cell membrane</location>
        <topology evidence="1">Multi-pass membrane protein</topology>
    </subcellularLocation>
</comment>
<comment type="similarity">
    <text evidence="1">Belongs to the AAE transporter (TC 2.A.81) family. YbjL subfamily.</text>
</comment>
<reference key="1">
    <citation type="journal article" date="2006" name="J. Bacteriol.">
        <title>Complete genome sequence of Yersinia pestis strains Antiqua and Nepal516: evidence of gene reduction in an emerging pathogen.</title>
        <authorList>
            <person name="Chain P.S.G."/>
            <person name="Hu P."/>
            <person name="Malfatti S.A."/>
            <person name="Radnedge L."/>
            <person name="Larimer F."/>
            <person name="Vergez L.M."/>
            <person name="Worsham P."/>
            <person name="Chu M.C."/>
            <person name="Andersen G.L."/>
        </authorList>
    </citation>
    <scope>NUCLEOTIDE SEQUENCE [LARGE SCALE GENOMIC DNA]</scope>
    <source>
        <strain>Antiqua</strain>
    </source>
</reference>
<name>Y617_YERPA</name>
<feature type="chain" id="PRO_0000329152" description="Putative transport protein YPA_0617">
    <location>
        <begin position="1"/>
        <end position="562"/>
    </location>
</feature>
<feature type="transmembrane region" description="Helical" evidence="1">
    <location>
        <begin position="8"/>
        <end position="28"/>
    </location>
</feature>
<feature type="transmembrane region" description="Helical" evidence="1">
    <location>
        <begin position="37"/>
        <end position="57"/>
    </location>
</feature>
<feature type="transmembrane region" description="Helical" evidence="1">
    <location>
        <begin position="66"/>
        <end position="86"/>
    </location>
</feature>
<feature type="transmembrane region" description="Helical" evidence="1">
    <location>
        <begin position="94"/>
        <end position="114"/>
    </location>
</feature>
<feature type="transmembrane region" description="Helical" evidence="1">
    <location>
        <begin position="118"/>
        <end position="138"/>
    </location>
</feature>
<feature type="transmembrane region" description="Helical" evidence="1">
    <location>
        <begin position="158"/>
        <end position="178"/>
    </location>
</feature>
<feature type="transmembrane region" description="Helical" evidence="1">
    <location>
        <begin position="383"/>
        <end position="403"/>
    </location>
</feature>
<feature type="transmembrane region" description="Helical" evidence="1">
    <location>
        <begin position="406"/>
        <end position="426"/>
    </location>
</feature>
<feature type="transmembrane region" description="Helical" evidence="1">
    <location>
        <begin position="447"/>
        <end position="467"/>
    </location>
</feature>
<feature type="transmembrane region" description="Helical" evidence="1">
    <location>
        <begin position="475"/>
        <end position="495"/>
    </location>
</feature>
<feature type="transmembrane region" description="Helical" evidence="1">
    <location>
        <begin position="541"/>
        <end position="561"/>
    </location>
</feature>
<feature type="domain" description="RCK C-terminal 1" evidence="1">
    <location>
        <begin position="202"/>
        <end position="288"/>
    </location>
</feature>
<feature type="domain" description="RCK C-terminal 2" evidence="1">
    <location>
        <begin position="290"/>
        <end position="373"/>
    </location>
</feature>
<proteinExistence type="inferred from homology"/>
<accession>Q1CAD7</accession>
<keyword id="KW-1003">Cell membrane</keyword>
<keyword id="KW-0472">Membrane</keyword>
<keyword id="KW-0677">Repeat</keyword>
<keyword id="KW-0812">Transmembrane</keyword>
<keyword id="KW-1133">Transmembrane helix</keyword>
<keyword id="KW-0813">Transport</keyword>
<organism>
    <name type="scientific">Yersinia pestis bv. Antiqua (strain Antiqua)</name>
    <dbReference type="NCBI Taxonomy" id="360102"/>
    <lineage>
        <taxon>Bacteria</taxon>
        <taxon>Pseudomonadati</taxon>
        <taxon>Pseudomonadota</taxon>
        <taxon>Gammaproteobacteria</taxon>
        <taxon>Enterobacterales</taxon>
        <taxon>Yersiniaceae</taxon>
        <taxon>Yersinia</taxon>
    </lineage>
</organism>
<sequence length="562" mass="60230">MNINVANLLNGNYILLLFVVLALGLCLGKLRLGSIQLGNAIGVLVVSLLLGQQHFAINTEALNLGFMLFIFCVGVEAGPNFFSIFFRDGKNYLMLALVMVGSAMILALGLGKLFGWDIGLTAGMLAGSMTSTPVLVGAGDTLRHTMANGSSLQQAQDNLSLGYALTYLIGLVSLILGARYLPKLQHQDLPTSAQQIARERGLDTDSQRKVYLPVIRAYRVGPELVAWADGKNLRELGIYRQTGCYIERIRRNGILANPDGDAVLQVGDEISLVGYPDAHSRLDPSFRNGKEVFDRDLLDMRIVTEEIVVKNSNAVGKRLSHLKLTDHGCFLNRVIRSQIEMPIDDNVVLNKGDVLQVSGDARRVKSVAEKIGFISIHSQVTDLLAFCSFFILGLMIGLITFQFSNFSFGIGNAAGLLLAGIMLGFLRANHPTFGYIPQGALNMVKEFGLMVFMAGVGLSAGGGINSSLGAVGGQMLISGLIVSLVPVVICFVFGAYVLRMNRALLFGAIMGARTCAPAMDIISDTARSNIPALGYAGTYAIANVLLTLAGSLIVILWPGILG</sequence>
<protein>
    <recommendedName>
        <fullName evidence="1">Putative transport protein YPA_0617</fullName>
    </recommendedName>
</protein>
<evidence type="ECO:0000255" key="1">
    <source>
        <dbReference type="HAMAP-Rule" id="MF_01015"/>
    </source>
</evidence>
<gene>
    <name type="ordered locus">YPA_0617</name>
</gene>